<name>TILS_CORGL</name>
<dbReference type="EC" id="6.3.4.19" evidence="1"/>
<dbReference type="EMBL" id="BA000036">
    <property type="protein sequence ID" value="BAC00092.1"/>
    <property type="status" value="ALT_INIT"/>
    <property type="molecule type" value="Genomic_DNA"/>
</dbReference>
<dbReference type="EMBL" id="BX927156">
    <property type="protein sequence ID" value="CAF20721.1"/>
    <property type="molecule type" value="Genomic_DNA"/>
</dbReference>
<dbReference type="RefSeq" id="NP_601894.1">
    <property type="nucleotide sequence ID" value="NC_003450.3"/>
</dbReference>
<dbReference type="RefSeq" id="WP_011015318.1">
    <property type="nucleotide sequence ID" value="NC_006958.1"/>
</dbReference>
<dbReference type="SMR" id="Q6M2E8"/>
<dbReference type="STRING" id="196627.cg2986"/>
<dbReference type="GeneID" id="1020645"/>
<dbReference type="KEGG" id="cgb:cg2986"/>
<dbReference type="KEGG" id="cgl:Cgl2698"/>
<dbReference type="PATRIC" id="fig|196627.13.peg.2630"/>
<dbReference type="eggNOG" id="COG0037">
    <property type="taxonomic scope" value="Bacteria"/>
</dbReference>
<dbReference type="HOGENOM" id="CLU_018869_1_1_11"/>
<dbReference type="OrthoDB" id="5244702at2"/>
<dbReference type="BioCyc" id="CORYNE:G18NG-12315-MONOMER"/>
<dbReference type="Proteomes" id="UP000000582">
    <property type="component" value="Chromosome"/>
</dbReference>
<dbReference type="Proteomes" id="UP000001009">
    <property type="component" value="Chromosome"/>
</dbReference>
<dbReference type="GO" id="GO:0005737">
    <property type="term" value="C:cytoplasm"/>
    <property type="evidence" value="ECO:0007669"/>
    <property type="project" value="UniProtKB-SubCell"/>
</dbReference>
<dbReference type="GO" id="GO:0005524">
    <property type="term" value="F:ATP binding"/>
    <property type="evidence" value="ECO:0007669"/>
    <property type="project" value="UniProtKB-UniRule"/>
</dbReference>
<dbReference type="GO" id="GO:0032267">
    <property type="term" value="F:tRNA(Ile)-lysidine synthase activity"/>
    <property type="evidence" value="ECO:0007669"/>
    <property type="project" value="UniProtKB-EC"/>
</dbReference>
<dbReference type="GO" id="GO:0006400">
    <property type="term" value="P:tRNA modification"/>
    <property type="evidence" value="ECO:0007669"/>
    <property type="project" value="UniProtKB-UniRule"/>
</dbReference>
<dbReference type="CDD" id="cd01992">
    <property type="entry name" value="TilS_N"/>
    <property type="match status" value="1"/>
</dbReference>
<dbReference type="Gene3D" id="3.40.50.620">
    <property type="entry name" value="HUPs"/>
    <property type="match status" value="1"/>
</dbReference>
<dbReference type="HAMAP" id="MF_01161">
    <property type="entry name" value="tRNA_Ile_lys_synt"/>
    <property type="match status" value="1"/>
</dbReference>
<dbReference type="InterPro" id="IPR014729">
    <property type="entry name" value="Rossmann-like_a/b/a_fold"/>
</dbReference>
<dbReference type="InterPro" id="IPR011063">
    <property type="entry name" value="TilS/TtcA_N"/>
</dbReference>
<dbReference type="InterPro" id="IPR012094">
    <property type="entry name" value="tRNA_Ile_lys_synt"/>
</dbReference>
<dbReference type="InterPro" id="IPR012795">
    <property type="entry name" value="tRNA_Ile_lys_synt_N"/>
</dbReference>
<dbReference type="InterPro" id="IPR015262">
    <property type="entry name" value="tRNA_Ile_lys_synt_subst-bd"/>
</dbReference>
<dbReference type="NCBIfam" id="TIGR02432">
    <property type="entry name" value="lysidine_TilS_N"/>
    <property type="match status" value="1"/>
</dbReference>
<dbReference type="PANTHER" id="PTHR43033">
    <property type="entry name" value="TRNA(ILE)-LYSIDINE SYNTHASE-RELATED"/>
    <property type="match status" value="1"/>
</dbReference>
<dbReference type="PANTHER" id="PTHR43033:SF1">
    <property type="entry name" value="TRNA(ILE)-LYSIDINE SYNTHASE-RELATED"/>
    <property type="match status" value="1"/>
</dbReference>
<dbReference type="Pfam" id="PF01171">
    <property type="entry name" value="ATP_bind_3"/>
    <property type="match status" value="1"/>
</dbReference>
<dbReference type="Pfam" id="PF09179">
    <property type="entry name" value="TilS"/>
    <property type="match status" value="1"/>
</dbReference>
<dbReference type="SUPFAM" id="SSF52402">
    <property type="entry name" value="Adenine nucleotide alpha hydrolases-like"/>
    <property type="match status" value="1"/>
</dbReference>
<keyword id="KW-0067">ATP-binding</keyword>
<keyword id="KW-0963">Cytoplasm</keyword>
<keyword id="KW-0436">Ligase</keyword>
<keyword id="KW-0547">Nucleotide-binding</keyword>
<keyword id="KW-1185">Reference proteome</keyword>
<keyword id="KW-0819">tRNA processing</keyword>
<protein>
    <recommendedName>
        <fullName evidence="1">tRNA(Ile)-lysidine synthase</fullName>
        <ecNumber evidence="1">6.3.4.19</ecNumber>
    </recommendedName>
    <alternativeName>
        <fullName evidence="1">tRNA(Ile)-2-lysyl-cytidine synthase</fullName>
    </alternativeName>
    <alternativeName>
        <fullName evidence="1">tRNA(Ile)-lysidine synthetase</fullName>
    </alternativeName>
</protein>
<proteinExistence type="inferred from homology"/>
<evidence type="ECO:0000255" key="1">
    <source>
        <dbReference type="HAMAP-Rule" id="MF_01161"/>
    </source>
</evidence>
<evidence type="ECO:0000305" key="2"/>
<organism>
    <name type="scientific">Corynebacterium glutamicum (strain ATCC 13032 / DSM 20300 / JCM 1318 / BCRC 11384 / CCUG 27702 / LMG 3730 / NBRC 12168 / NCIMB 10025 / NRRL B-2784 / 534)</name>
    <dbReference type="NCBI Taxonomy" id="196627"/>
    <lineage>
        <taxon>Bacteria</taxon>
        <taxon>Bacillati</taxon>
        <taxon>Actinomycetota</taxon>
        <taxon>Actinomycetes</taxon>
        <taxon>Mycobacteriales</taxon>
        <taxon>Corynebacteriaceae</taxon>
        <taxon>Corynebacterium</taxon>
    </lineage>
</organism>
<sequence length="314" mass="33957">MASLIGNLELPRVSPNFLELRKAVRPYLKEHVHIGLSGGPDSLALVAAVLAEKSQVTAICIDHNLQTGSAEVTHNAAAMARHMGAQAIVKSIEVAPGEGMEAAAREARYAAFAQLTDEIWVAHTMDDQAETYLLGGLRGNPAGMKDASRRPELSIIRPLLGARRAHTHGACVELGLKPWHDPQNFDDAFRRVAIRNQVIPLLAQVHGGDPVPGLALAARRAVEDAEVVEGDVEKRRLEWQDGFPVTLAGEPTGLRRRMLADFLRGEGIAVTSRKLDAIDRLLTDWRGQGGVAVGKSDNGRLEVVRQSGKLKITD</sequence>
<comment type="function">
    <text evidence="1">Ligates lysine onto the cytidine present at position 34 of the AUA codon-specific tRNA(Ile) that contains the anticodon CAU, in an ATP-dependent manner. Cytidine is converted to lysidine, thus changing the amino acid specificity of the tRNA from methionine to isoleucine.</text>
</comment>
<comment type="catalytic activity">
    <reaction evidence="1">
        <text>cytidine(34) in tRNA(Ile2) + L-lysine + ATP = lysidine(34) in tRNA(Ile2) + AMP + diphosphate + H(+)</text>
        <dbReference type="Rhea" id="RHEA:43744"/>
        <dbReference type="Rhea" id="RHEA-COMP:10625"/>
        <dbReference type="Rhea" id="RHEA-COMP:10670"/>
        <dbReference type="ChEBI" id="CHEBI:15378"/>
        <dbReference type="ChEBI" id="CHEBI:30616"/>
        <dbReference type="ChEBI" id="CHEBI:32551"/>
        <dbReference type="ChEBI" id="CHEBI:33019"/>
        <dbReference type="ChEBI" id="CHEBI:82748"/>
        <dbReference type="ChEBI" id="CHEBI:83665"/>
        <dbReference type="ChEBI" id="CHEBI:456215"/>
        <dbReference type="EC" id="6.3.4.19"/>
    </reaction>
</comment>
<comment type="subcellular location">
    <subcellularLocation>
        <location evidence="1">Cytoplasm</location>
    </subcellularLocation>
</comment>
<comment type="domain">
    <text>The N-terminal region contains the highly conserved SGGXDS motif, predicted to be a P-loop motif involved in ATP binding.</text>
</comment>
<comment type="similarity">
    <text evidence="1">Belongs to the tRNA(Ile)-lysidine synthase family.</text>
</comment>
<comment type="sequence caution" evidence="2">
    <conflict type="erroneous initiation">
        <sequence resource="EMBL-CDS" id="BAC00092"/>
    </conflict>
</comment>
<accession>Q6M2E8</accession>
<accession>Q8NM81</accession>
<feature type="chain" id="PRO_0000181684" description="tRNA(Ile)-lysidine synthase">
    <location>
        <begin position="1"/>
        <end position="314"/>
    </location>
</feature>
<feature type="binding site" evidence="1">
    <location>
        <begin position="37"/>
        <end position="42"/>
    </location>
    <ligand>
        <name>ATP</name>
        <dbReference type="ChEBI" id="CHEBI:30616"/>
    </ligand>
</feature>
<gene>
    <name evidence="1" type="primary">tilS</name>
    <name type="ordered locus">Cgl2698</name>
    <name type="ordered locus">cg2986</name>
</gene>
<reference key="1">
    <citation type="journal article" date="2003" name="Appl. Microbiol. Biotechnol.">
        <title>The Corynebacterium glutamicum genome: features and impacts on biotechnological processes.</title>
        <authorList>
            <person name="Ikeda M."/>
            <person name="Nakagawa S."/>
        </authorList>
    </citation>
    <scope>NUCLEOTIDE SEQUENCE [LARGE SCALE GENOMIC DNA]</scope>
    <source>
        <strain>ATCC 13032 / DSM 20300 / JCM 1318 / BCRC 11384 / CCUG 27702 / LMG 3730 / NBRC 12168 / NCIMB 10025 / NRRL B-2784 / 534</strain>
    </source>
</reference>
<reference key="2">
    <citation type="journal article" date="2003" name="J. Biotechnol.">
        <title>The complete Corynebacterium glutamicum ATCC 13032 genome sequence and its impact on the production of L-aspartate-derived amino acids and vitamins.</title>
        <authorList>
            <person name="Kalinowski J."/>
            <person name="Bathe B."/>
            <person name="Bartels D."/>
            <person name="Bischoff N."/>
            <person name="Bott M."/>
            <person name="Burkovski A."/>
            <person name="Dusch N."/>
            <person name="Eggeling L."/>
            <person name="Eikmanns B.J."/>
            <person name="Gaigalat L."/>
            <person name="Goesmann A."/>
            <person name="Hartmann M."/>
            <person name="Huthmacher K."/>
            <person name="Kraemer R."/>
            <person name="Linke B."/>
            <person name="McHardy A.C."/>
            <person name="Meyer F."/>
            <person name="Moeckel B."/>
            <person name="Pfefferle W."/>
            <person name="Puehler A."/>
            <person name="Rey D.A."/>
            <person name="Rueckert C."/>
            <person name="Rupp O."/>
            <person name="Sahm H."/>
            <person name="Wendisch V.F."/>
            <person name="Wiegraebe I."/>
            <person name="Tauch A."/>
        </authorList>
    </citation>
    <scope>NUCLEOTIDE SEQUENCE [LARGE SCALE GENOMIC DNA]</scope>
    <source>
        <strain>ATCC 13032 / DSM 20300 / JCM 1318 / BCRC 11384 / CCUG 27702 / LMG 3730 / NBRC 12168 / NCIMB 10025 / NRRL B-2784 / 534</strain>
    </source>
</reference>